<proteinExistence type="inferred from homology"/>
<organism>
    <name type="scientific">Solibacter usitatus (strain Ellin6076)</name>
    <dbReference type="NCBI Taxonomy" id="234267"/>
    <lineage>
        <taxon>Bacteria</taxon>
        <taxon>Pseudomonadati</taxon>
        <taxon>Acidobacteriota</taxon>
        <taxon>Terriglobia</taxon>
        <taxon>Bryobacterales</taxon>
        <taxon>Solibacteraceae</taxon>
        <taxon>Candidatus Solibacter</taxon>
    </lineage>
</organism>
<comment type="function">
    <text evidence="1">Catalyzes the hydrolysis of the adenine ring of phosphoribosyl-AMP.</text>
</comment>
<comment type="catalytic activity">
    <reaction evidence="1">
        <text>1-(5-phospho-beta-D-ribosyl)-5'-AMP + H2O = 1-(5-phospho-beta-D-ribosyl)-5-[(5-phospho-beta-D-ribosylamino)methylideneamino]imidazole-4-carboxamide</text>
        <dbReference type="Rhea" id="RHEA:20049"/>
        <dbReference type="ChEBI" id="CHEBI:15377"/>
        <dbReference type="ChEBI" id="CHEBI:58435"/>
        <dbReference type="ChEBI" id="CHEBI:59457"/>
        <dbReference type="EC" id="3.5.4.19"/>
    </reaction>
</comment>
<comment type="cofactor">
    <cofactor evidence="1">
        <name>Mg(2+)</name>
        <dbReference type="ChEBI" id="CHEBI:18420"/>
    </cofactor>
    <text evidence="1">Binds 1 Mg(2+) ion per subunit.</text>
</comment>
<comment type="cofactor">
    <cofactor evidence="1">
        <name>Zn(2+)</name>
        <dbReference type="ChEBI" id="CHEBI:29105"/>
    </cofactor>
    <text evidence="1">Binds 1 zinc ion per subunit.</text>
</comment>
<comment type="pathway">
    <text evidence="1">Amino-acid biosynthesis; L-histidine biosynthesis; L-histidine from 5-phospho-alpha-D-ribose 1-diphosphate: step 3/9.</text>
</comment>
<comment type="subunit">
    <text evidence="1">Homodimer.</text>
</comment>
<comment type="subcellular location">
    <subcellularLocation>
        <location evidence="1">Cytoplasm</location>
    </subcellularLocation>
</comment>
<comment type="similarity">
    <text evidence="1">Belongs to the PRA-CH family.</text>
</comment>
<sequence length="126" mass="13895">MNLDFAKSDGLVTAVIQDHASGRVLMVGYMNQEAFNKTVETGFATFWSRSRKKLWLKGESSGHRLVVKEISTDCDLDAVLVKVEAQGPGVCHEGYESCFFRRLDAGEWKVADNPTYDPGAVYGGKS</sequence>
<gene>
    <name evidence="1" type="primary">hisI</name>
    <name type="ordered locus">Acid_3857</name>
</gene>
<name>HIS3_SOLUE</name>
<evidence type="ECO:0000255" key="1">
    <source>
        <dbReference type="HAMAP-Rule" id="MF_01021"/>
    </source>
</evidence>
<feature type="chain" id="PRO_0000319720" description="Phosphoribosyl-AMP cyclohydrolase">
    <location>
        <begin position="1"/>
        <end position="126"/>
    </location>
</feature>
<feature type="binding site" evidence="1">
    <location>
        <position position="73"/>
    </location>
    <ligand>
        <name>Mg(2+)</name>
        <dbReference type="ChEBI" id="CHEBI:18420"/>
    </ligand>
</feature>
<feature type="binding site" evidence="1">
    <location>
        <position position="74"/>
    </location>
    <ligand>
        <name>Zn(2+)</name>
        <dbReference type="ChEBI" id="CHEBI:29105"/>
        <note>ligand shared between dimeric partners</note>
    </ligand>
</feature>
<feature type="binding site" evidence="1">
    <location>
        <position position="75"/>
    </location>
    <ligand>
        <name>Mg(2+)</name>
        <dbReference type="ChEBI" id="CHEBI:18420"/>
    </ligand>
</feature>
<feature type="binding site" evidence="1">
    <location>
        <position position="77"/>
    </location>
    <ligand>
        <name>Mg(2+)</name>
        <dbReference type="ChEBI" id="CHEBI:18420"/>
    </ligand>
</feature>
<feature type="binding site" evidence="1">
    <location>
        <position position="91"/>
    </location>
    <ligand>
        <name>Zn(2+)</name>
        <dbReference type="ChEBI" id="CHEBI:29105"/>
        <note>ligand shared between dimeric partners</note>
    </ligand>
</feature>
<feature type="binding site" evidence="1">
    <location>
        <position position="98"/>
    </location>
    <ligand>
        <name>Zn(2+)</name>
        <dbReference type="ChEBI" id="CHEBI:29105"/>
        <note>ligand shared between dimeric partners</note>
    </ligand>
</feature>
<keyword id="KW-0028">Amino-acid biosynthesis</keyword>
<keyword id="KW-0963">Cytoplasm</keyword>
<keyword id="KW-0368">Histidine biosynthesis</keyword>
<keyword id="KW-0378">Hydrolase</keyword>
<keyword id="KW-0460">Magnesium</keyword>
<keyword id="KW-0479">Metal-binding</keyword>
<keyword id="KW-0862">Zinc</keyword>
<protein>
    <recommendedName>
        <fullName evidence="1">Phosphoribosyl-AMP cyclohydrolase</fullName>
        <shortName evidence="1">PRA-CH</shortName>
        <ecNumber evidence="1">3.5.4.19</ecNumber>
    </recommendedName>
</protein>
<reference key="1">
    <citation type="journal article" date="2009" name="Appl. Environ. Microbiol.">
        <title>Three genomes from the phylum Acidobacteria provide insight into the lifestyles of these microorganisms in soils.</title>
        <authorList>
            <person name="Ward N.L."/>
            <person name="Challacombe J.F."/>
            <person name="Janssen P.H."/>
            <person name="Henrissat B."/>
            <person name="Coutinho P.M."/>
            <person name="Wu M."/>
            <person name="Xie G."/>
            <person name="Haft D.H."/>
            <person name="Sait M."/>
            <person name="Badger J."/>
            <person name="Barabote R.D."/>
            <person name="Bradley B."/>
            <person name="Brettin T.S."/>
            <person name="Brinkac L.M."/>
            <person name="Bruce D."/>
            <person name="Creasy T."/>
            <person name="Daugherty S.C."/>
            <person name="Davidsen T.M."/>
            <person name="DeBoy R.T."/>
            <person name="Detter J.C."/>
            <person name="Dodson R.J."/>
            <person name="Durkin A.S."/>
            <person name="Ganapathy A."/>
            <person name="Gwinn-Giglio M."/>
            <person name="Han C.S."/>
            <person name="Khouri H."/>
            <person name="Kiss H."/>
            <person name="Kothari S.P."/>
            <person name="Madupu R."/>
            <person name="Nelson K.E."/>
            <person name="Nelson W.C."/>
            <person name="Paulsen I."/>
            <person name="Penn K."/>
            <person name="Ren Q."/>
            <person name="Rosovitz M.J."/>
            <person name="Selengut J.D."/>
            <person name="Shrivastava S."/>
            <person name="Sullivan S.A."/>
            <person name="Tapia R."/>
            <person name="Thompson L.S."/>
            <person name="Watkins K.L."/>
            <person name="Yang Q."/>
            <person name="Yu C."/>
            <person name="Zafar N."/>
            <person name="Zhou L."/>
            <person name="Kuske C.R."/>
        </authorList>
    </citation>
    <scope>NUCLEOTIDE SEQUENCE [LARGE SCALE GENOMIC DNA]</scope>
    <source>
        <strain>Ellin6076</strain>
    </source>
</reference>
<dbReference type="EC" id="3.5.4.19" evidence="1"/>
<dbReference type="EMBL" id="CP000473">
    <property type="protein sequence ID" value="ABJ84826.1"/>
    <property type="molecule type" value="Genomic_DNA"/>
</dbReference>
<dbReference type="SMR" id="Q01ZT9"/>
<dbReference type="STRING" id="234267.Acid_3857"/>
<dbReference type="KEGG" id="sus:Acid_3857"/>
<dbReference type="eggNOG" id="COG0139">
    <property type="taxonomic scope" value="Bacteria"/>
</dbReference>
<dbReference type="HOGENOM" id="CLU_048577_5_3_0"/>
<dbReference type="InParanoid" id="Q01ZT9"/>
<dbReference type="OrthoDB" id="9795769at2"/>
<dbReference type="UniPathway" id="UPA00031">
    <property type="reaction ID" value="UER00008"/>
</dbReference>
<dbReference type="GO" id="GO:0005737">
    <property type="term" value="C:cytoplasm"/>
    <property type="evidence" value="ECO:0007669"/>
    <property type="project" value="UniProtKB-SubCell"/>
</dbReference>
<dbReference type="GO" id="GO:0000287">
    <property type="term" value="F:magnesium ion binding"/>
    <property type="evidence" value="ECO:0007669"/>
    <property type="project" value="UniProtKB-UniRule"/>
</dbReference>
<dbReference type="GO" id="GO:0004635">
    <property type="term" value="F:phosphoribosyl-AMP cyclohydrolase activity"/>
    <property type="evidence" value="ECO:0007669"/>
    <property type="project" value="UniProtKB-UniRule"/>
</dbReference>
<dbReference type="GO" id="GO:0008270">
    <property type="term" value="F:zinc ion binding"/>
    <property type="evidence" value="ECO:0007669"/>
    <property type="project" value="UniProtKB-UniRule"/>
</dbReference>
<dbReference type="GO" id="GO:0000105">
    <property type="term" value="P:L-histidine biosynthetic process"/>
    <property type="evidence" value="ECO:0007669"/>
    <property type="project" value="UniProtKB-UniRule"/>
</dbReference>
<dbReference type="FunFam" id="3.10.20.810:FF:000001">
    <property type="entry name" value="Histidine biosynthesis bifunctional protein HisIE"/>
    <property type="match status" value="1"/>
</dbReference>
<dbReference type="Gene3D" id="3.10.20.810">
    <property type="entry name" value="Phosphoribosyl-AMP cyclohydrolase"/>
    <property type="match status" value="1"/>
</dbReference>
<dbReference type="HAMAP" id="MF_01021">
    <property type="entry name" value="HisI"/>
    <property type="match status" value="1"/>
</dbReference>
<dbReference type="InterPro" id="IPR026660">
    <property type="entry name" value="PRA-CH"/>
</dbReference>
<dbReference type="InterPro" id="IPR002496">
    <property type="entry name" value="PRib_AMP_CycHydrolase_dom"/>
</dbReference>
<dbReference type="InterPro" id="IPR038019">
    <property type="entry name" value="PRib_AMP_CycHydrolase_sf"/>
</dbReference>
<dbReference type="NCBIfam" id="NF000768">
    <property type="entry name" value="PRK00051.1"/>
    <property type="match status" value="1"/>
</dbReference>
<dbReference type="PANTHER" id="PTHR42945">
    <property type="entry name" value="HISTIDINE BIOSYNTHESIS BIFUNCTIONAL PROTEIN"/>
    <property type="match status" value="1"/>
</dbReference>
<dbReference type="PANTHER" id="PTHR42945:SF1">
    <property type="entry name" value="HISTIDINE BIOSYNTHESIS BIFUNCTIONAL PROTEIN HIS7"/>
    <property type="match status" value="1"/>
</dbReference>
<dbReference type="Pfam" id="PF01502">
    <property type="entry name" value="PRA-CH"/>
    <property type="match status" value="1"/>
</dbReference>
<dbReference type="SUPFAM" id="SSF141734">
    <property type="entry name" value="HisI-like"/>
    <property type="match status" value="1"/>
</dbReference>
<accession>Q01ZT9</accession>